<keyword id="KW-0238">DNA-binding</keyword>
<keyword id="KW-1017">Isopeptide bond</keyword>
<keyword id="KW-0479">Metal-binding</keyword>
<keyword id="KW-0539">Nucleus</keyword>
<keyword id="KW-0597">Phosphoprotein</keyword>
<keyword id="KW-1185">Reference proteome</keyword>
<keyword id="KW-0677">Repeat</keyword>
<keyword id="KW-0804">Transcription</keyword>
<keyword id="KW-0805">Transcription regulation</keyword>
<keyword id="KW-0832">Ubl conjugation</keyword>
<keyword id="KW-0862">Zinc</keyword>
<keyword id="KW-0863">Zinc-finger</keyword>
<evidence type="ECO:0000250" key="1">
    <source>
        <dbReference type="UniProtKB" id="Q16600"/>
    </source>
</evidence>
<evidence type="ECO:0000255" key="2">
    <source>
        <dbReference type="PROSITE-ProRule" id="PRU00042"/>
    </source>
</evidence>
<evidence type="ECO:0000305" key="3"/>
<reference key="1">
    <citation type="submission" date="2004-11" db="EMBL/GenBank/DDBJ databases">
        <authorList>
            <consortium name="The German cDNA consortium"/>
        </authorList>
    </citation>
    <scope>NUCLEOTIDE SEQUENCE [LARGE SCALE MRNA]</scope>
    <source>
        <tissue>Heart</tissue>
    </source>
</reference>
<accession>Q5R8G9</accession>
<dbReference type="EMBL" id="CR859783">
    <property type="protein sequence ID" value="CAH91941.1"/>
    <property type="molecule type" value="mRNA"/>
</dbReference>
<dbReference type="RefSeq" id="NP_001126126.1">
    <property type="nucleotide sequence ID" value="NM_001132654.1"/>
</dbReference>
<dbReference type="SMR" id="Q5R8G9"/>
<dbReference type="STRING" id="9601.ENSPPYP00000002589"/>
<dbReference type="GeneID" id="100173082"/>
<dbReference type="KEGG" id="pon:100173082"/>
<dbReference type="CTD" id="8187"/>
<dbReference type="eggNOG" id="KOG1721">
    <property type="taxonomic scope" value="Eukaryota"/>
</dbReference>
<dbReference type="InParanoid" id="Q5R8G9"/>
<dbReference type="OrthoDB" id="654211at2759"/>
<dbReference type="Proteomes" id="UP000001595">
    <property type="component" value="Unplaced"/>
</dbReference>
<dbReference type="GO" id="GO:0005634">
    <property type="term" value="C:nucleus"/>
    <property type="evidence" value="ECO:0007669"/>
    <property type="project" value="UniProtKB-SubCell"/>
</dbReference>
<dbReference type="GO" id="GO:0000981">
    <property type="term" value="F:DNA-binding transcription factor activity, RNA polymerase II-specific"/>
    <property type="evidence" value="ECO:0007669"/>
    <property type="project" value="TreeGrafter"/>
</dbReference>
<dbReference type="GO" id="GO:0000977">
    <property type="term" value="F:RNA polymerase II transcription regulatory region sequence-specific DNA binding"/>
    <property type="evidence" value="ECO:0007669"/>
    <property type="project" value="TreeGrafter"/>
</dbReference>
<dbReference type="GO" id="GO:0008270">
    <property type="term" value="F:zinc ion binding"/>
    <property type="evidence" value="ECO:0007669"/>
    <property type="project" value="UniProtKB-KW"/>
</dbReference>
<dbReference type="FunFam" id="3.30.160.60:FF:000029">
    <property type="entry name" value="GLI family zinc finger 4"/>
    <property type="match status" value="2"/>
</dbReference>
<dbReference type="FunFam" id="3.30.160.60:FF:001158">
    <property type="entry name" value="zinc finger protein 22"/>
    <property type="match status" value="1"/>
</dbReference>
<dbReference type="FunFam" id="3.30.160.60:FF:000363">
    <property type="entry name" value="Zinc finger protein 239"/>
    <property type="match status" value="1"/>
</dbReference>
<dbReference type="FunFam" id="3.30.160.60:FF:001195">
    <property type="entry name" value="Zinc finger protein 239"/>
    <property type="match status" value="2"/>
</dbReference>
<dbReference type="FunFam" id="3.30.160.60:FF:002343">
    <property type="entry name" value="Zinc finger protein 33A"/>
    <property type="match status" value="1"/>
</dbReference>
<dbReference type="FunFam" id="3.30.160.60:FF:000902">
    <property type="entry name" value="Zinc finger protein 445"/>
    <property type="match status" value="1"/>
</dbReference>
<dbReference type="FunFam" id="3.30.160.60:FF:002357">
    <property type="entry name" value="Zinc finger protein 782"/>
    <property type="match status" value="1"/>
</dbReference>
<dbReference type="Gene3D" id="3.30.160.60">
    <property type="entry name" value="Classic Zinc Finger"/>
    <property type="match status" value="9"/>
</dbReference>
<dbReference type="InterPro" id="IPR036236">
    <property type="entry name" value="Znf_C2H2_sf"/>
</dbReference>
<dbReference type="InterPro" id="IPR013087">
    <property type="entry name" value="Znf_C2H2_type"/>
</dbReference>
<dbReference type="PANTHER" id="PTHR24381">
    <property type="entry name" value="ZINC FINGER PROTEIN"/>
    <property type="match status" value="1"/>
</dbReference>
<dbReference type="PANTHER" id="PTHR24381:SF443">
    <property type="entry name" value="ZINC FINGER PROTEIN CKR1"/>
    <property type="match status" value="1"/>
</dbReference>
<dbReference type="Pfam" id="PF00096">
    <property type="entry name" value="zf-C2H2"/>
    <property type="match status" value="9"/>
</dbReference>
<dbReference type="SMART" id="SM00355">
    <property type="entry name" value="ZnF_C2H2"/>
    <property type="match status" value="9"/>
</dbReference>
<dbReference type="SUPFAM" id="SSF57667">
    <property type="entry name" value="beta-beta-alpha zinc fingers"/>
    <property type="match status" value="6"/>
</dbReference>
<dbReference type="PROSITE" id="PS00028">
    <property type="entry name" value="ZINC_FINGER_C2H2_1"/>
    <property type="match status" value="9"/>
</dbReference>
<dbReference type="PROSITE" id="PS50157">
    <property type="entry name" value="ZINC_FINGER_C2H2_2"/>
    <property type="match status" value="9"/>
</dbReference>
<organism>
    <name type="scientific">Pongo abelii</name>
    <name type="common">Sumatran orangutan</name>
    <name type="synonym">Pongo pygmaeus abelii</name>
    <dbReference type="NCBI Taxonomy" id="9601"/>
    <lineage>
        <taxon>Eukaryota</taxon>
        <taxon>Metazoa</taxon>
        <taxon>Chordata</taxon>
        <taxon>Craniata</taxon>
        <taxon>Vertebrata</taxon>
        <taxon>Euteleostomi</taxon>
        <taxon>Mammalia</taxon>
        <taxon>Eutheria</taxon>
        <taxon>Euarchontoglires</taxon>
        <taxon>Primates</taxon>
        <taxon>Haplorrhini</taxon>
        <taxon>Catarrhini</taxon>
        <taxon>Hominidae</taxon>
        <taxon>Pongo</taxon>
    </lineage>
</organism>
<proteinExistence type="evidence at transcript level"/>
<feature type="chain" id="PRO_0000290348" description="Zinc finger protein 239">
    <location>
        <begin position="1"/>
        <end position="458"/>
    </location>
</feature>
<feature type="zinc finger region" description="C2H2-type 1" evidence="2">
    <location>
        <begin position="207"/>
        <end position="229"/>
    </location>
</feature>
<feature type="zinc finger region" description="C2H2-type 2" evidence="2">
    <location>
        <begin position="235"/>
        <end position="257"/>
    </location>
</feature>
<feature type="zinc finger region" description="C2H2-type 3" evidence="2">
    <location>
        <begin position="263"/>
        <end position="285"/>
    </location>
</feature>
<feature type="zinc finger region" description="C2H2-type 4" evidence="2">
    <location>
        <begin position="291"/>
        <end position="313"/>
    </location>
</feature>
<feature type="zinc finger region" description="C2H2-type 5" evidence="2">
    <location>
        <begin position="319"/>
        <end position="341"/>
    </location>
</feature>
<feature type="zinc finger region" description="C2H2-type 6" evidence="2">
    <location>
        <begin position="347"/>
        <end position="369"/>
    </location>
</feature>
<feature type="zinc finger region" description="C2H2-type 7" evidence="2">
    <location>
        <begin position="375"/>
        <end position="397"/>
    </location>
</feature>
<feature type="zinc finger region" description="C2H2-type 8" evidence="2">
    <location>
        <begin position="403"/>
        <end position="425"/>
    </location>
</feature>
<feature type="zinc finger region" description="C2H2-type 9" evidence="2">
    <location>
        <begin position="431"/>
        <end position="453"/>
    </location>
</feature>
<feature type="modified residue" description="Phosphoserine" evidence="1">
    <location>
        <position position="191"/>
    </location>
</feature>
<feature type="cross-link" description="Glycyl lysine isopeptide (Lys-Gly) (interchain with G-Cter in SUMO2)" evidence="1">
    <location>
        <position position="108"/>
    </location>
</feature>
<sequence length="458" mass="51601">MASTITGSQDCIVNHRGEVDGEPELDISPCQQWGEASSPISRNRDSVMTLQSGCFENIESETYLPLKVSSQIDTQDSSVKFCKNEPQDHQESRRLFVMEESTERKVIKGESCSENLQVKLVSDGQELASPLLNGEATCQNGQLKESLDPIDCNCKDIHGWKSQVVSCSQQRAHTEEKPCDHNNCGKILNTSPDGHPYEKIHTAEKQYECSQCGKNFSQSSELLLHQRDHTEEKPYKCEQCGKGFTRSSSLLIHQAVHTDEKPYKCDKCGKGFTRSSSLLIHHAVHTGEKPYKCDKCGKGFSQSSKLHIHQRVHTGEKPYECEECGMSFSQRSNLHIHQRVHTGERPYKCGECGKGFSQSSNLHIHRCIHTGEKPYQCYECGKGFSQSPDLRIHLRVHTGEKPYHCGKCGKGFSQSSKLLIHQRVHTGEKPYECSKCGKGFSQSSNLHIHQRVHKKDPR</sequence>
<name>ZN239_PONAB</name>
<comment type="function">
    <text>May be involved in transcriptional regulation.</text>
</comment>
<comment type="subcellular location">
    <subcellularLocation>
        <location evidence="3">Nucleus</location>
    </subcellularLocation>
</comment>
<comment type="similarity">
    <text evidence="3">Belongs to the krueppel C2H2-type zinc-finger protein family.</text>
</comment>
<gene>
    <name type="primary">ZNF239</name>
</gene>
<protein>
    <recommendedName>
        <fullName>Zinc finger protein 239</fullName>
    </recommendedName>
</protein>